<name>RL11_PSEPG</name>
<sequence length="143" mass="14866">MAKKIQAYIKLQVKAGQANPSPPVGPALGQHGVNIMEFCKAFNARTQGQEAGLPTPVIITVYSDRSFTFETKSTPASVLLKKAAGLTSGSARPNTVKVGTVTRAQLEDIAKAKQADLTAADLDAAVRTIAGSARSMGLNVEGV</sequence>
<organism>
    <name type="scientific">Pseudomonas putida (strain GB-1)</name>
    <dbReference type="NCBI Taxonomy" id="76869"/>
    <lineage>
        <taxon>Bacteria</taxon>
        <taxon>Pseudomonadati</taxon>
        <taxon>Pseudomonadota</taxon>
        <taxon>Gammaproteobacteria</taxon>
        <taxon>Pseudomonadales</taxon>
        <taxon>Pseudomonadaceae</taxon>
        <taxon>Pseudomonas</taxon>
    </lineage>
</organism>
<keyword id="KW-0488">Methylation</keyword>
<keyword id="KW-0687">Ribonucleoprotein</keyword>
<keyword id="KW-0689">Ribosomal protein</keyword>
<keyword id="KW-0694">RNA-binding</keyword>
<keyword id="KW-0699">rRNA-binding</keyword>
<gene>
    <name evidence="1" type="primary">rplK</name>
    <name type="ordered locus">PputGB1_0473</name>
</gene>
<proteinExistence type="inferred from homology"/>
<protein>
    <recommendedName>
        <fullName evidence="1">Large ribosomal subunit protein uL11</fullName>
    </recommendedName>
    <alternativeName>
        <fullName evidence="2">50S ribosomal protein L11</fullName>
    </alternativeName>
</protein>
<dbReference type="EMBL" id="CP000926">
    <property type="protein sequence ID" value="ABY96384.1"/>
    <property type="molecule type" value="Genomic_DNA"/>
</dbReference>
<dbReference type="RefSeq" id="WP_003255500.1">
    <property type="nucleotide sequence ID" value="NC_010322.1"/>
</dbReference>
<dbReference type="SMR" id="B0KK56"/>
<dbReference type="GeneID" id="97165968"/>
<dbReference type="KEGG" id="ppg:PputGB1_0473"/>
<dbReference type="eggNOG" id="COG0080">
    <property type="taxonomic scope" value="Bacteria"/>
</dbReference>
<dbReference type="HOGENOM" id="CLU_074237_2_0_6"/>
<dbReference type="Proteomes" id="UP000002157">
    <property type="component" value="Chromosome"/>
</dbReference>
<dbReference type="GO" id="GO:0022625">
    <property type="term" value="C:cytosolic large ribosomal subunit"/>
    <property type="evidence" value="ECO:0007669"/>
    <property type="project" value="TreeGrafter"/>
</dbReference>
<dbReference type="GO" id="GO:0070180">
    <property type="term" value="F:large ribosomal subunit rRNA binding"/>
    <property type="evidence" value="ECO:0007669"/>
    <property type="project" value="UniProtKB-UniRule"/>
</dbReference>
<dbReference type="GO" id="GO:0003735">
    <property type="term" value="F:structural constituent of ribosome"/>
    <property type="evidence" value="ECO:0007669"/>
    <property type="project" value="InterPro"/>
</dbReference>
<dbReference type="GO" id="GO:0006412">
    <property type="term" value="P:translation"/>
    <property type="evidence" value="ECO:0007669"/>
    <property type="project" value="UniProtKB-UniRule"/>
</dbReference>
<dbReference type="CDD" id="cd00349">
    <property type="entry name" value="Ribosomal_L11"/>
    <property type="match status" value="1"/>
</dbReference>
<dbReference type="FunFam" id="1.10.10.250:FF:000001">
    <property type="entry name" value="50S ribosomal protein L11"/>
    <property type="match status" value="1"/>
</dbReference>
<dbReference type="FunFam" id="3.30.1550.10:FF:000001">
    <property type="entry name" value="50S ribosomal protein L11"/>
    <property type="match status" value="1"/>
</dbReference>
<dbReference type="Gene3D" id="1.10.10.250">
    <property type="entry name" value="Ribosomal protein L11, C-terminal domain"/>
    <property type="match status" value="1"/>
</dbReference>
<dbReference type="Gene3D" id="3.30.1550.10">
    <property type="entry name" value="Ribosomal protein L11/L12, N-terminal domain"/>
    <property type="match status" value="1"/>
</dbReference>
<dbReference type="HAMAP" id="MF_00736">
    <property type="entry name" value="Ribosomal_uL11"/>
    <property type="match status" value="1"/>
</dbReference>
<dbReference type="InterPro" id="IPR000911">
    <property type="entry name" value="Ribosomal_uL11"/>
</dbReference>
<dbReference type="InterPro" id="IPR006519">
    <property type="entry name" value="Ribosomal_uL11_bac-typ"/>
</dbReference>
<dbReference type="InterPro" id="IPR020783">
    <property type="entry name" value="Ribosomal_uL11_C"/>
</dbReference>
<dbReference type="InterPro" id="IPR036769">
    <property type="entry name" value="Ribosomal_uL11_C_sf"/>
</dbReference>
<dbReference type="InterPro" id="IPR020785">
    <property type="entry name" value="Ribosomal_uL11_CS"/>
</dbReference>
<dbReference type="InterPro" id="IPR020784">
    <property type="entry name" value="Ribosomal_uL11_N"/>
</dbReference>
<dbReference type="InterPro" id="IPR036796">
    <property type="entry name" value="Ribosomal_uL11_N_sf"/>
</dbReference>
<dbReference type="NCBIfam" id="TIGR01632">
    <property type="entry name" value="L11_bact"/>
    <property type="match status" value="1"/>
</dbReference>
<dbReference type="PANTHER" id="PTHR11661">
    <property type="entry name" value="60S RIBOSOMAL PROTEIN L12"/>
    <property type="match status" value="1"/>
</dbReference>
<dbReference type="PANTHER" id="PTHR11661:SF1">
    <property type="entry name" value="LARGE RIBOSOMAL SUBUNIT PROTEIN UL11M"/>
    <property type="match status" value="1"/>
</dbReference>
<dbReference type="Pfam" id="PF00298">
    <property type="entry name" value="Ribosomal_L11"/>
    <property type="match status" value="1"/>
</dbReference>
<dbReference type="Pfam" id="PF03946">
    <property type="entry name" value="Ribosomal_L11_N"/>
    <property type="match status" value="1"/>
</dbReference>
<dbReference type="SMART" id="SM00649">
    <property type="entry name" value="RL11"/>
    <property type="match status" value="1"/>
</dbReference>
<dbReference type="SUPFAM" id="SSF54747">
    <property type="entry name" value="Ribosomal L11/L12e N-terminal domain"/>
    <property type="match status" value="1"/>
</dbReference>
<dbReference type="SUPFAM" id="SSF46906">
    <property type="entry name" value="Ribosomal protein L11, C-terminal domain"/>
    <property type="match status" value="1"/>
</dbReference>
<dbReference type="PROSITE" id="PS00359">
    <property type="entry name" value="RIBOSOMAL_L11"/>
    <property type="match status" value="1"/>
</dbReference>
<reference key="1">
    <citation type="submission" date="2008-01" db="EMBL/GenBank/DDBJ databases">
        <title>Complete sequence of Pseudomonas putida GB-1.</title>
        <authorList>
            <consortium name="US DOE Joint Genome Institute"/>
            <person name="Copeland A."/>
            <person name="Lucas S."/>
            <person name="Lapidus A."/>
            <person name="Barry K."/>
            <person name="Glavina del Rio T."/>
            <person name="Dalin E."/>
            <person name="Tice H."/>
            <person name="Pitluck S."/>
            <person name="Bruce D."/>
            <person name="Goodwin L."/>
            <person name="Chertkov O."/>
            <person name="Brettin T."/>
            <person name="Detter J.C."/>
            <person name="Han C."/>
            <person name="Kuske C.R."/>
            <person name="Schmutz J."/>
            <person name="Larimer F."/>
            <person name="Land M."/>
            <person name="Hauser L."/>
            <person name="Kyrpides N."/>
            <person name="Kim E."/>
            <person name="McCarthy J.K."/>
            <person name="Richardson P."/>
        </authorList>
    </citation>
    <scope>NUCLEOTIDE SEQUENCE [LARGE SCALE GENOMIC DNA]</scope>
    <source>
        <strain>GB-1</strain>
    </source>
</reference>
<comment type="function">
    <text evidence="1">Forms part of the ribosomal stalk which helps the ribosome interact with GTP-bound translation factors.</text>
</comment>
<comment type="subunit">
    <text evidence="1">Part of the ribosomal stalk of the 50S ribosomal subunit. Interacts with L10 and the large rRNA to form the base of the stalk. L10 forms an elongated spine to which L12 dimers bind in a sequential fashion forming a multimeric L10(L12)X complex.</text>
</comment>
<comment type="PTM">
    <text evidence="1">One or more lysine residues are methylated.</text>
</comment>
<comment type="similarity">
    <text evidence="1">Belongs to the universal ribosomal protein uL11 family.</text>
</comment>
<evidence type="ECO:0000255" key="1">
    <source>
        <dbReference type="HAMAP-Rule" id="MF_00736"/>
    </source>
</evidence>
<evidence type="ECO:0000305" key="2"/>
<accession>B0KK56</accession>
<feature type="chain" id="PRO_1000083397" description="Large ribosomal subunit protein uL11">
    <location>
        <begin position="1"/>
        <end position="143"/>
    </location>
</feature>